<feature type="chain" id="PRO_0000358895" description="Probable serine/threonine-protein kinase roco9">
    <location>
        <begin position="1"/>
        <end position="3365"/>
    </location>
</feature>
<feature type="domain" description="Rho-GAP" evidence="2">
    <location>
        <begin position="243"/>
        <end position="437"/>
    </location>
</feature>
<feature type="domain" description="Myotubularin phosphatase">
    <location>
        <begin position="804"/>
        <end position="1484"/>
    </location>
</feature>
<feature type="repeat" description="LRR 1">
    <location>
        <begin position="1510"/>
        <end position="1526"/>
    </location>
</feature>
<feature type="repeat" description="LRR 2">
    <location>
        <begin position="1527"/>
        <end position="1549"/>
    </location>
</feature>
<feature type="repeat" description="LRR 3">
    <location>
        <begin position="1550"/>
        <end position="1572"/>
    </location>
</feature>
<feature type="repeat" description="LRR 4">
    <location>
        <begin position="1576"/>
        <end position="1599"/>
    </location>
</feature>
<feature type="repeat" description="LRR 5">
    <location>
        <begin position="1600"/>
        <end position="1622"/>
    </location>
</feature>
<feature type="repeat" description="LRR 6">
    <location>
        <begin position="1624"/>
        <end position="1645"/>
    </location>
</feature>
<feature type="repeat" description="LRR 7">
    <location>
        <begin position="1646"/>
        <end position="1668"/>
    </location>
</feature>
<feature type="repeat" description="LRR 8">
    <location>
        <begin position="1670"/>
        <end position="1691"/>
    </location>
</feature>
<feature type="repeat" description="LRR 9">
    <location>
        <begin position="1697"/>
        <end position="1720"/>
    </location>
</feature>
<feature type="repeat" description="LRR 10">
    <location>
        <begin position="1722"/>
        <end position="1743"/>
    </location>
</feature>
<feature type="repeat" description="LRR 11">
    <location>
        <begin position="1744"/>
        <end position="1770"/>
    </location>
</feature>
<feature type="repeat" description="LRR 12">
    <location>
        <begin position="1772"/>
        <end position="1789"/>
    </location>
</feature>
<feature type="repeat" description="LRR 13">
    <location>
        <begin position="1790"/>
        <end position="1812"/>
    </location>
</feature>
<feature type="repeat" description="LRR 14">
    <location>
        <begin position="1814"/>
        <end position="1835"/>
    </location>
</feature>
<feature type="repeat" description="LRR 15">
    <location>
        <begin position="1837"/>
        <end position="1861"/>
    </location>
</feature>
<feature type="repeat" description="LRR 16">
    <location>
        <begin position="1863"/>
        <end position="1887"/>
    </location>
</feature>
<feature type="domain" description="Protein kinase" evidence="1">
    <location>
        <begin position="3008"/>
        <end position="3269"/>
    </location>
</feature>
<feature type="region of interest" description="Disordered" evidence="4">
    <location>
        <begin position="1"/>
        <end position="177"/>
    </location>
</feature>
<feature type="region of interest" description="Disordered" evidence="4">
    <location>
        <begin position="397"/>
        <end position="497"/>
    </location>
</feature>
<feature type="region of interest" description="Disordered" evidence="4">
    <location>
        <begin position="944"/>
        <end position="985"/>
    </location>
</feature>
<feature type="region of interest" description="Disordered" evidence="4">
    <location>
        <begin position="1044"/>
        <end position="1098"/>
    </location>
</feature>
<feature type="region of interest" description="Disordered" evidence="4">
    <location>
        <begin position="1261"/>
        <end position="1301"/>
    </location>
</feature>
<feature type="region of interest" description="Disordered" evidence="4">
    <location>
        <begin position="1932"/>
        <end position="1963"/>
    </location>
</feature>
<feature type="region of interest" description="Disordered" evidence="4">
    <location>
        <begin position="2190"/>
        <end position="2389"/>
    </location>
</feature>
<feature type="region of interest" description="Disordered" evidence="4">
    <location>
        <begin position="2507"/>
        <end position="2567"/>
    </location>
</feature>
<feature type="region of interest" description="Disordered" evidence="4">
    <location>
        <begin position="2674"/>
        <end position="2704"/>
    </location>
</feature>
<feature type="region of interest" description="Disordered" evidence="4">
    <location>
        <begin position="3311"/>
        <end position="3365"/>
    </location>
</feature>
<feature type="compositionally biased region" description="Basic and acidic residues" evidence="4">
    <location>
        <begin position="8"/>
        <end position="27"/>
    </location>
</feature>
<feature type="compositionally biased region" description="Low complexity" evidence="4">
    <location>
        <begin position="51"/>
        <end position="84"/>
    </location>
</feature>
<feature type="compositionally biased region" description="Low complexity" evidence="4">
    <location>
        <begin position="100"/>
        <end position="116"/>
    </location>
</feature>
<feature type="compositionally biased region" description="Low complexity" evidence="4">
    <location>
        <begin position="137"/>
        <end position="169"/>
    </location>
</feature>
<feature type="compositionally biased region" description="Low complexity" evidence="4">
    <location>
        <begin position="397"/>
        <end position="415"/>
    </location>
</feature>
<feature type="compositionally biased region" description="Polar residues" evidence="4">
    <location>
        <begin position="421"/>
        <end position="434"/>
    </location>
</feature>
<feature type="compositionally biased region" description="Low complexity" evidence="4">
    <location>
        <begin position="435"/>
        <end position="445"/>
    </location>
</feature>
<feature type="compositionally biased region" description="Low complexity" evidence="4">
    <location>
        <begin position="457"/>
        <end position="489"/>
    </location>
</feature>
<feature type="compositionally biased region" description="Low complexity" evidence="4">
    <location>
        <begin position="959"/>
        <end position="974"/>
    </location>
</feature>
<feature type="compositionally biased region" description="Low complexity" evidence="4">
    <location>
        <begin position="1044"/>
        <end position="1096"/>
    </location>
</feature>
<feature type="compositionally biased region" description="Low complexity" evidence="4">
    <location>
        <begin position="1262"/>
        <end position="1301"/>
    </location>
</feature>
<feature type="compositionally biased region" description="Basic and acidic residues" evidence="4">
    <location>
        <begin position="1932"/>
        <end position="1947"/>
    </location>
</feature>
<feature type="compositionally biased region" description="Low complexity" evidence="4">
    <location>
        <begin position="2190"/>
        <end position="2205"/>
    </location>
</feature>
<feature type="compositionally biased region" description="Low complexity" evidence="4">
    <location>
        <begin position="2216"/>
        <end position="2389"/>
    </location>
</feature>
<feature type="compositionally biased region" description="Low complexity" evidence="4">
    <location>
        <begin position="2522"/>
        <end position="2567"/>
    </location>
</feature>
<feature type="compositionally biased region" description="Low complexity" evidence="4">
    <location>
        <begin position="2676"/>
        <end position="2688"/>
    </location>
</feature>
<feature type="compositionally biased region" description="Low complexity" evidence="4">
    <location>
        <begin position="3311"/>
        <end position="3333"/>
    </location>
</feature>
<feature type="compositionally biased region" description="Acidic residues" evidence="4">
    <location>
        <begin position="3354"/>
        <end position="3365"/>
    </location>
</feature>
<feature type="active site" description="Proton acceptor" evidence="1 3">
    <location>
        <position position="3132"/>
    </location>
</feature>
<feature type="binding site" evidence="1">
    <location>
        <begin position="3014"/>
        <end position="3022"/>
    </location>
    <ligand>
        <name>ATP</name>
        <dbReference type="ChEBI" id="CHEBI:30616"/>
    </ligand>
</feature>
<feature type="binding site" evidence="1">
    <location>
        <position position="3035"/>
    </location>
    <ligand>
        <name>ATP</name>
        <dbReference type="ChEBI" id="CHEBI:30616"/>
    </ligand>
</feature>
<feature type="site" description="Arginine finger; crucial for GTP hydrolysis by stabilizing the transition state" evidence="2">
    <location>
        <position position="281"/>
    </location>
</feature>
<accession>Q6XHA7</accession>
<accession>Q54JA1</accession>
<sequence length="3365" mass="380768">MTSIANLFDKKSKRSNEDTGEKEETKKSRSGTLKFKTLFGTSKKDKEKKILQQLQQQQDDEQQQQQQQFMEGDNNNNNTNSLNTPSVEGDSENINRLAASTNSTSYSSLRSSSTRSIDYNPSNNGGNGGIRSDSFYSQTSESSDITSTSTTSPTMSAASSSSSSGTVKTPKPPKSSKLKHIYNSLKFKSLKTEKNGSSSSIKSNISNFEFIMPNTPLPIFDQQSPPIHFYNSNQFSDFQYFGTPLYSLIKRQDNGLSIPILLEKSISFLEGHCHVEDLFFRKYNNEKVKFMRNSFERTGDFNFYYPDPQDPYDVAALLVEFIASLPDQLLNVELYNAIKNHTSALNSQYGGYWDIQYLAQKLSVESREFLQRLLFFLKKHVSACLFKQQQQQQQQRESTEVLTLSLSSSTSTLEPEPQPLPLSTSTQRLPQQSSDDNSNNDNNNKNDNDNDNDNDNNNDNNNINNDNGEIIPPSIQVTPPTSPQTQPKQQQPPQPPQKTLIEKLSELFTPLFVNYKTHSAFYSSTSTLITSCEDIFVHIDERPITLPGEFIMMQIKNVIIPPTNLKLEHTISSSSKSDKNDKNDKNGNTDVTLWQSGTLFITNYRMIWKKDESNSIDSESNSILLPEDIITPTQSFSSINNNNNNNSSKFVEIKLYSFEIILTSIIKWESFGKSLKSTTPMMSTPTTFQNGGVNRSQFQIFLCYCKNIRFQYMGFSDESNFRDLEKLNLILAYYINPLIDFGRYFSSVNNEIPRAPLLANNNNSSSNLISLGRSGITNTSTANINGSNRNSVGGNGSHDYTTNIWDIYSPLIEGQRLKLDLDKDWRVVEFLSRDTSTIYPKRILIPNLIGDELLQSYVRKTQSKIPIFSWSNQNNKSMLFRICVYNQPFNNKFNSGGTLAYNNNSTIINNNSVIITNSSTIGTNTSGISNSNHLIVGEIEPPSPIKKRQQQIVDKKDTSSPLSSLRSSKGIPSKSSKKDKQGFLSSSTSSIIPIQTTISTDTVDVKLYNLFVNKEEQLQSSTSSSPSTSLNNSSNNLNKEFQQIHQQMQQNQLNSSSNNNNNNNNNNNNNNNNNNNNNNNNNNNNNNNNNNNNNNNKINKRQNEATIVFTNKVGGTSDNHINIISVYEQFKMNSSNIIFLSIPTREQVEACWFDLYQSITSFDGSMDAWKSIEESKWVDSVKLLLEGCVKVSNLLDEGSSVLLKPPIDSPLHTLDLASISSLTMVLSDPFYRTLDGFLILIEKEWIQYGFPFNNINYHKEQNNLNNNNGNKENSSSSSSSSSSTSTTPSITKKSSGSISKGSSGIASLINDLDKYDSNFVLPDTIHTESQKKKTYLFQDQYESSILVNRSFSPIFVQFLDAVWQLQRQFPFHFEFNESLLLLLVKESFSGRFGNFLYSEALRDSERKFLKRSPSIWTFINQNKSTFINLLYKHSANSSSSSSSTNKLPSPISPRQSFIFKQEDFNEMIKPSCDNDQIILWSSFFTEFINSRESQQISKKLIGKVKCDLISQKLTFLSIDRNLLSYFSTLTKLNLSRNYFNTFPIEIILLSNLTHLWLQDNRIKSIPSSLLKLIGSKLKLQEFDLSHNLLESLHKSIYTLSTLTKLVLDNNKLIIIPESISKMKQLKCLSVQNNRLSSFPQALSLCVGLEELYVQNNQIRELPLGFFKLGSLRMLDLRNNQITKFKCHKLDDKSCFLMNEIIHFRMGPNPLQKLSNQMFEMRSLIHLELTGCSLSTVPLKLLDNLVNLEALYLNQNKLSEISIDFKRLFKLSVLDLSDNQFTNVPIHAMLPSLKKLYLHNNQLYNISFNDFNLPLLSELRLDGNKLTYVSPSIGTKLLSLTLLNLDRNPQITTLPHTLALLKKLKSLIVNSNIMESPFRELETTDAILRYLTLQMQQSQFHPRNKLIIISDITNPQIKNEFIKNLTIAKPLTSKEREKEKEKEKEKEKEKKHKNIGYGSKDKDKKGININYQQQHQQQQQYQQHQYSSQIGFNQNLPIKWEIDYENYPNSALYNLASTIHCTNSFISQPIMISSSNQECTKLNKEEFLNSRFNTQEISKKKNLTIFIRDLSQLNSSGSASASGNGSGNGNGIGISNTNCSQHLFSKRAVYCLVWALSESEEPTRIYKWLESIRDRCTFATVFIVGLYNSDYCQDVPKDYYTFITPKIEQKCHNLFPNFTFSFINILNNNNNNNNNNNNNNNNNNNNSGGNVVPVQPSINNSIDNNVENTNNNNNIINNNNNNNNNNNNNNNNNNSYNSNSNSNSNNNNNNNSNNNNNNNINNNNINNNNNNNNNNNNNNNNNNNNNNSNNNSNNNSNSNSNSNSNNSNNNNINNNNSNNNNNNNNNNNNNNNNNNNNNNNNNNNNNDNDNNNNDNNNNLNNSNLNNNNGSNINISSSNNILGGMPKLREEIKNVFLNFKPFGTKVSSSQKLFEKHIKTLQTPFISKKELFSIGEMCKLDKIETKNTCELLTELGLLFWSEDHDWVILDPIWLSNTLNLLLTLKQSSSAPSTPPQIPLNSTNLNNTSIPSQITTTSTNSSSTSTSTSTSTSTSTSTSTSTSTSTPLQTPTSLVSLSNISLSTISIPIQPNTSSILLDSSMNDSFNKESSGSNKVANPTIRKRDIILMSNLEGIWNDIPTRLYPYLLTLAKKFNIAYQIDTLYDPTSWGFVYPSPISNQQQQQQQQSSTQHQHQHHHHQQQQQTSINLNRLSISGSPSLRSISIRNGGNINTLNSSGSNNSSPLKFPNLALSPIRNGSNSNLTHHHGSNSSLNNLLSPLKNLQLQQKYDKLKLLNEKVIFLPNELPNEPPMSMDKMFLDVGEPRSLCRIFQFEKKIPSSFFPRLLSQLYMFCSIKHCWKNGVILENCYLSFPVARRFPMSPNAKNPFRRSSTISVLEADDLVSIQVLGDTKIEISSSKMCRHILQIFESILESYNQLAYTIYISCIHCIETLPKSEQYLFSLNQIEESVIKGKTYQSCPIHSSIPIKLNQLAPDLTMNDLRHKLIDFKEVELDPNPIGEGGTATVYKGKWRQSDVAIKLLKTDVVGSDFSKVFAEYRREIFCLSSFIHDNILDLKGFCLEPLAIITEFQSGGNLYDYIHDLKNPLDWQLRIKIAKGIAASLQTLHDSRPSVVHRDLKSPNILLSSKDSLTMECHLCDFSLSGFSTTVANRSVQNPVWLAPEVINNELCSDKSDVYAYGVILFELLSRTRFFSNITFMSEVEGLITEGVRPSLPSHNLPEYDSLLNICWAQDPTCRPSFIEITKKLEEIELILKTHTPVEPVYTETSKNQHIQLNRGNTIYTLVKRPITPIQQQQQQKQQQLQQQKQSPKQLQQQKPLPTPPKQLSNNDSTPTKPLDDSSDSSSEDSNN</sequence>
<protein>
    <recommendedName>
        <fullName>Probable serine/threonine-protein kinase roco9</fullName>
        <ecNumber>2.7.11.1</ecNumber>
    </recommendedName>
    <alternativeName>
        <fullName>Ras of complex proteins and C-terminal of roc 9</fullName>
    </alternativeName>
</protein>
<dbReference type="EC" id="2.7.11.1"/>
<dbReference type="EMBL" id="AY232271">
    <property type="protein sequence ID" value="AAO83654.1"/>
    <property type="molecule type" value="Genomic_DNA"/>
</dbReference>
<dbReference type="EMBL" id="AAFI02000109">
    <property type="protein sequence ID" value="EAL63322.1"/>
    <property type="molecule type" value="Genomic_DNA"/>
</dbReference>
<dbReference type="RefSeq" id="XP_636835.1">
    <property type="nucleotide sequence ID" value="XM_631743.1"/>
</dbReference>
<dbReference type="SMR" id="Q6XHA7"/>
<dbReference type="FunCoup" id="Q6XHA7">
    <property type="interactions" value="393"/>
</dbReference>
<dbReference type="STRING" id="44689.Q6XHA7"/>
<dbReference type="GlyGen" id="Q6XHA7">
    <property type="glycosylation" value="2 sites"/>
</dbReference>
<dbReference type="PaxDb" id="44689-DDB0191512"/>
<dbReference type="EnsemblProtists" id="EAL63322">
    <property type="protein sequence ID" value="EAL63322"/>
    <property type="gene ID" value="DDB_G0288183"/>
</dbReference>
<dbReference type="GeneID" id="8626504"/>
<dbReference type="KEGG" id="ddi:DDB_G0288183"/>
<dbReference type="dictyBase" id="DDB_G0288183">
    <property type="gene designation" value="roco9"/>
</dbReference>
<dbReference type="VEuPathDB" id="AmoebaDB:DDB_G0288183"/>
<dbReference type="eggNOG" id="KOG0192">
    <property type="taxonomic scope" value="Eukaryota"/>
</dbReference>
<dbReference type="eggNOG" id="KOG0619">
    <property type="taxonomic scope" value="Eukaryota"/>
</dbReference>
<dbReference type="HOGENOM" id="CLU_225060_0_0_1"/>
<dbReference type="InParanoid" id="Q6XHA7"/>
<dbReference type="OMA" id="FPFHFEF"/>
<dbReference type="PRO" id="PR:Q6XHA7"/>
<dbReference type="Proteomes" id="UP000002195">
    <property type="component" value="Chromosome 5"/>
</dbReference>
<dbReference type="GO" id="GO:0005737">
    <property type="term" value="C:cytoplasm"/>
    <property type="evidence" value="ECO:0000318"/>
    <property type="project" value="GO_Central"/>
</dbReference>
<dbReference type="GO" id="GO:0005829">
    <property type="term" value="C:cytosol"/>
    <property type="evidence" value="ECO:0000304"/>
    <property type="project" value="dictyBase"/>
</dbReference>
<dbReference type="GO" id="GO:0005524">
    <property type="term" value="F:ATP binding"/>
    <property type="evidence" value="ECO:0007669"/>
    <property type="project" value="UniProtKB-KW"/>
</dbReference>
<dbReference type="GO" id="GO:0005096">
    <property type="term" value="F:GTPase activator activity"/>
    <property type="evidence" value="ECO:0007669"/>
    <property type="project" value="UniProtKB-KW"/>
</dbReference>
<dbReference type="GO" id="GO:0106310">
    <property type="term" value="F:protein serine kinase activity"/>
    <property type="evidence" value="ECO:0007669"/>
    <property type="project" value="RHEA"/>
</dbReference>
<dbReference type="GO" id="GO:0004674">
    <property type="term" value="F:protein serine/threonine kinase activity"/>
    <property type="evidence" value="ECO:0007669"/>
    <property type="project" value="UniProtKB-KW"/>
</dbReference>
<dbReference type="GO" id="GO:0007165">
    <property type="term" value="P:signal transduction"/>
    <property type="evidence" value="ECO:0007669"/>
    <property type="project" value="InterPro"/>
</dbReference>
<dbReference type="CDD" id="cd00159">
    <property type="entry name" value="RhoGAP"/>
    <property type="match status" value="1"/>
</dbReference>
<dbReference type="CDD" id="cd13999">
    <property type="entry name" value="STKc_MAP3K-like"/>
    <property type="match status" value="1"/>
</dbReference>
<dbReference type="Gene3D" id="3.30.200.20">
    <property type="entry name" value="Phosphorylase Kinase, domain 1"/>
    <property type="match status" value="1"/>
</dbReference>
<dbReference type="Gene3D" id="1.10.555.10">
    <property type="entry name" value="Rho GTPase activation protein"/>
    <property type="match status" value="1"/>
</dbReference>
<dbReference type="Gene3D" id="3.80.10.10">
    <property type="entry name" value="Ribonuclease Inhibitor"/>
    <property type="match status" value="4"/>
</dbReference>
<dbReference type="Gene3D" id="1.10.510.10">
    <property type="entry name" value="Transferase(Phosphotransferase) domain 1"/>
    <property type="match status" value="1"/>
</dbReference>
<dbReference type="InterPro" id="IPR011009">
    <property type="entry name" value="Kinase-like_dom_sf"/>
</dbReference>
<dbReference type="InterPro" id="IPR001611">
    <property type="entry name" value="Leu-rich_rpt"/>
</dbReference>
<dbReference type="InterPro" id="IPR003591">
    <property type="entry name" value="Leu-rich_rpt_typical-subtyp"/>
</dbReference>
<dbReference type="InterPro" id="IPR032675">
    <property type="entry name" value="LRR_dom_sf"/>
</dbReference>
<dbReference type="InterPro" id="IPR010569">
    <property type="entry name" value="Myotubularin-like_Pase_dom"/>
</dbReference>
<dbReference type="InterPro" id="IPR050647">
    <property type="entry name" value="Plant_LRR-RLKs"/>
</dbReference>
<dbReference type="InterPro" id="IPR029021">
    <property type="entry name" value="Prot-tyrosine_phosphatase-like"/>
</dbReference>
<dbReference type="InterPro" id="IPR000719">
    <property type="entry name" value="Prot_kinase_dom"/>
</dbReference>
<dbReference type="InterPro" id="IPR017441">
    <property type="entry name" value="Protein_kinase_ATP_BS"/>
</dbReference>
<dbReference type="InterPro" id="IPR008936">
    <property type="entry name" value="Rho_GTPase_activation_prot"/>
</dbReference>
<dbReference type="InterPro" id="IPR000198">
    <property type="entry name" value="RhoGAP_dom"/>
</dbReference>
<dbReference type="InterPro" id="IPR001245">
    <property type="entry name" value="Ser-Thr/Tyr_kinase_cat_dom"/>
</dbReference>
<dbReference type="InterPro" id="IPR008271">
    <property type="entry name" value="Ser/Thr_kinase_AS"/>
</dbReference>
<dbReference type="PANTHER" id="PTHR48056">
    <property type="entry name" value="LRR RECEPTOR-LIKE SERINE/THREONINE-PROTEIN KINASE-RELATED"/>
    <property type="match status" value="1"/>
</dbReference>
<dbReference type="PANTHER" id="PTHR48056:SF81">
    <property type="entry name" value="RECEPTOR PROTEIN-TYROSINE KINASE CEPR1"/>
    <property type="match status" value="1"/>
</dbReference>
<dbReference type="Pfam" id="PF06602">
    <property type="entry name" value="Myotub-related"/>
    <property type="match status" value="1"/>
</dbReference>
<dbReference type="Pfam" id="PF07714">
    <property type="entry name" value="PK_Tyr_Ser-Thr"/>
    <property type="match status" value="1"/>
</dbReference>
<dbReference type="SMART" id="SM00364">
    <property type="entry name" value="LRR_BAC"/>
    <property type="match status" value="7"/>
</dbReference>
<dbReference type="SMART" id="SM00365">
    <property type="entry name" value="LRR_SD22"/>
    <property type="match status" value="5"/>
</dbReference>
<dbReference type="SMART" id="SM00369">
    <property type="entry name" value="LRR_TYP"/>
    <property type="match status" value="11"/>
</dbReference>
<dbReference type="SMART" id="SM00324">
    <property type="entry name" value="RhoGAP"/>
    <property type="match status" value="1"/>
</dbReference>
<dbReference type="SMART" id="SM00220">
    <property type="entry name" value="S_TKc"/>
    <property type="match status" value="1"/>
</dbReference>
<dbReference type="SUPFAM" id="SSF52799">
    <property type="entry name" value="(Phosphotyrosine protein) phosphatases II"/>
    <property type="match status" value="1"/>
</dbReference>
<dbReference type="SUPFAM" id="SSF48350">
    <property type="entry name" value="GTPase activation domain, GAP"/>
    <property type="match status" value="1"/>
</dbReference>
<dbReference type="SUPFAM" id="SSF52058">
    <property type="entry name" value="L domain-like"/>
    <property type="match status" value="1"/>
</dbReference>
<dbReference type="SUPFAM" id="SSF56112">
    <property type="entry name" value="Protein kinase-like (PK-like)"/>
    <property type="match status" value="1"/>
</dbReference>
<dbReference type="PROSITE" id="PS51450">
    <property type="entry name" value="LRR"/>
    <property type="match status" value="13"/>
</dbReference>
<dbReference type="PROSITE" id="PS00107">
    <property type="entry name" value="PROTEIN_KINASE_ATP"/>
    <property type="match status" value="1"/>
</dbReference>
<dbReference type="PROSITE" id="PS50011">
    <property type="entry name" value="PROTEIN_KINASE_DOM"/>
    <property type="match status" value="1"/>
</dbReference>
<dbReference type="PROSITE" id="PS00108">
    <property type="entry name" value="PROTEIN_KINASE_ST"/>
    <property type="match status" value="1"/>
</dbReference>
<dbReference type="PROSITE" id="PS50238">
    <property type="entry name" value="RHOGAP"/>
    <property type="match status" value="1"/>
</dbReference>
<evidence type="ECO:0000255" key="1">
    <source>
        <dbReference type="PROSITE-ProRule" id="PRU00159"/>
    </source>
</evidence>
<evidence type="ECO:0000255" key="2">
    <source>
        <dbReference type="PROSITE-ProRule" id="PRU00172"/>
    </source>
</evidence>
<evidence type="ECO:0000255" key="3">
    <source>
        <dbReference type="PROSITE-ProRule" id="PRU10027"/>
    </source>
</evidence>
<evidence type="ECO:0000256" key="4">
    <source>
        <dbReference type="SAM" id="MobiDB-lite"/>
    </source>
</evidence>
<evidence type="ECO:0000305" key="5"/>
<organism>
    <name type="scientific">Dictyostelium discoideum</name>
    <name type="common">Social amoeba</name>
    <dbReference type="NCBI Taxonomy" id="44689"/>
    <lineage>
        <taxon>Eukaryota</taxon>
        <taxon>Amoebozoa</taxon>
        <taxon>Evosea</taxon>
        <taxon>Eumycetozoa</taxon>
        <taxon>Dictyostelia</taxon>
        <taxon>Dictyosteliales</taxon>
        <taxon>Dictyosteliaceae</taxon>
        <taxon>Dictyostelium</taxon>
    </lineage>
</organism>
<name>ROCO9_DICDI</name>
<comment type="catalytic activity">
    <reaction>
        <text>L-seryl-[protein] + ATP = O-phospho-L-seryl-[protein] + ADP + H(+)</text>
        <dbReference type="Rhea" id="RHEA:17989"/>
        <dbReference type="Rhea" id="RHEA-COMP:9863"/>
        <dbReference type="Rhea" id="RHEA-COMP:11604"/>
        <dbReference type="ChEBI" id="CHEBI:15378"/>
        <dbReference type="ChEBI" id="CHEBI:29999"/>
        <dbReference type="ChEBI" id="CHEBI:30616"/>
        <dbReference type="ChEBI" id="CHEBI:83421"/>
        <dbReference type="ChEBI" id="CHEBI:456216"/>
        <dbReference type="EC" id="2.7.11.1"/>
    </reaction>
</comment>
<comment type="catalytic activity">
    <reaction>
        <text>L-threonyl-[protein] + ATP = O-phospho-L-threonyl-[protein] + ADP + H(+)</text>
        <dbReference type="Rhea" id="RHEA:46608"/>
        <dbReference type="Rhea" id="RHEA-COMP:11060"/>
        <dbReference type="Rhea" id="RHEA-COMP:11605"/>
        <dbReference type="ChEBI" id="CHEBI:15378"/>
        <dbReference type="ChEBI" id="CHEBI:30013"/>
        <dbReference type="ChEBI" id="CHEBI:30616"/>
        <dbReference type="ChEBI" id="CHEBI:61977"/>
        <dbReference type="ChEBI" id="CHEBI:456216"/>
        <dbReference type="EC" id="2.7.11.1"/>
    </reaction>
</comment>
<comment type="similarity">
    <text evidence="5">Belongs to the protein kinase superfamily. TKL Ser/Thr protein kinase family. ROCO subfamily.</text>
</comment>
<proteinExistence type="inferred from homology"/>
<gene>
    <name type="primary">roco9</name>
    <name type="ORF">DDB_G0288183</name>
</gene>
<keyword id="KW-0067">ATP-binding</keyword>
<keyword id="KW-0343">GTPase activation</keyword>
<keyword id="KW-0418">Kinase</keyword>
<keyword id="KW-0433">Leucine-rich repeat</keyword>
<keyword id="KW-0547">Nucleotide-binding</keyword>
<keyword id="KW-1185">Reference proteome</keyword>
<keyword id="KW-0677">Repeat</keyword>
<keyword id="KW-0723">Serine/threonine-protein kinase</keyword>
<keyword id="KW-0808">Transferase</keyword>
<reference key="1">
    <citation type="journal article" date="2003" name="Biochim. Biophys. Acta">
        <title>Roc, a Ras/GTPase domain in complex proteins.</title>
        <authorList>
            <person name="Bosgraaf L."/>
            <person name="van Haastert P.J.M."/>
        </authorList>
    </citation>
    <scope>NUCLEOTIDE SEQUENCE [GENOMIC DNA]</scope>
</reference>
<reference key="2">
    <citation type="journal article" date="2005" name="Nature">
        <title>The genome of the social amoeba Dictyostelium discoideum.</title>
        <authorList>
            <person name="Eichinger L."/>
            <person name="Pachebat J.A."/>
            <person name="Gloeckner G."/>
            <person name="Rajandream M.A."/>
            <person name="Sucgang R."/>
            <person name="Berriman M."/>
            <person name="Song J."/>
            <person name="Olsen R."/>
            <person name="Szafranski K."/>
            <person name="Xu Q."/>
            <person name="Tunggal B."/>
            <person name="Kummerfeld S."/>
            <person name="Madera M."/>
            <person name="Konfortov B.A."/>
            <person name="Rivero F."/>
            <person name="Bankier A.T."/>
            <person name="Lehmann R."/>
            <person name="Hamlin N."/>
            <person name="Davies R."/>
            <person name="Gaudet P."/>
            <person name="Fey P."/>
            <person name="Pilcher K."/>
            <person name="Chen G."/>
            <person name="Saunders D."/>
            <person name="Sodergren E.J."/>
            <person name="Davis P."/>
            <person name="Kerhornou A."/>
            <person name="Nie X."/>
            <person name="Hall N."/>
            <person name="Anjard C."/>
            <person name="Hemphill L."/>
            <person name="Bason N."/>
            <person name="Farbrother P."/>
            <person name="Desany B."/>
            <person name="Just E."/>
            <person name="Morio T."/>
            <person name="Rost R."/>
            <person name="Churcher C.M."/>
            <person name="Cooper J."/>
            <person name="Haydock S."/>
            <person name="van Driessche N."/>
            <person name="Cronin A."/>
            <person name="Goodhead I."/>
            <person name="Muzny D.M."/>
            <person name="Mourier T."/>
            <person name="Pain A."/>
            <person name="Lu M."/>
            <person name="Harper D."/>
            <person name="Lindsay R."/>
            <person name="Hauser H."/>
            <person name="James K.D."/>
            <person name="Quiles M."/>
            <person name="Madan Babu M."/>
            <person name="Saito T."/>
            <person name="Buchrieser C."/>
            <person name="Wardroper A."/>
            <person name="Felder M."/>
            <person name="Thangavelu M."/>
            <person name="Johnson D."/>
            <person name="Knights A."/>
            <person name="Loulseged H."/>
            <person name="Mungall K.L."/>
            <person name="Oliver K."/>
            <person name="Price C."/>
            <person name="Quail M.A."/>
            <person name="Urushihara H."/>
            <person name="Hernandez J."/>
            <person name="Rabbinowitsch E."/>
            <person name="Steffen D."/>
            <person name="Sanders M."/>
            <person name="Ma J."/>
            <person name="Kohara Y."/>
            <person name="Sharp S."/>
            <person name="Simmonds M.N."/>
            <person name="Spiegler S."/>
            <person name="Tivey A."/>
            <person name="Sugano S."/>
            <person name="White B."/>
            <person name="Walker D."/>
            <person name="Woodward J.R."/>
            <person name="Winckler T."/>
            <person name="Tanaka Y."/>
            <person name="Shaulsky G."/>
            <person name="Schleicher M."/>
            <person name="Weinstock G.M."/>
            <person name="Rosenthal A."/>
            <person name="Cox E.C."/>
            <person name="Chisholm R.L."/>
            <person name="Gibbs R.A."/>
            <person name="Loomis W.F."/>
            <person name="Platzer M."/>
            <person name="Kay R.R."/>
            <person name="Williams J.G."/>
            <person name="Dear P.H."/>
            <person name="Noegel A.A."/>
            <person name="Barrell B.G."/>
            <person name="Kuspa A."/>
        </authorList>
    </citation>
    <scope>NUCLEOTIDE SEQUENCE [LARGE SCALE GENOMIC DNA]</scope>
    <source>
        <strain>AX4</strain>
    </source>
</reference>